<protein>
    <recommendedName>
        <fullName>Uncharacterized protein YGR204C-A</fullName>
    </recommendedName>
</protein>
<name>YG204_YEAST</name>
<accession>Q8TGT7</accession>
<accession>D6VUY7</accession>
<gene>
    <name type="ordered locus">YGR204C-A</name>
</gene>
<organism>
    <name type="scientific">Saccharomyces cerevisiae (strain ATCC 204508 / S288c)</name>
    <name type="common">Baker's yeast</name>
    <dbReference type="NCBI Taxonomy" id="559292"/>
    <lineage>
        <taxon>Eukaryota</taxon>
        <taxon>Fungi</taxon>
        <taxon>Dikarya</taxon>
        <taxon>Ascomycota</taxon>
        <taxon>Saccharomycotina</taxon>
        <taxon>Saccharomycetes</taxon>
        <taxon>Saccharomycetales</taxon>
        <taxon>Saccharomycetaceae</taxon>
        <taxon>Saccharomyces</taxon>
    </lineage>
</organism>
<dbReference type="EMBL" id="Z72989">
    <property type="status" value="NOT_ANNOTATED_CDS"/>
    <property type="molecule type" value="Genomic_DNA"/>
</dbReference>
<dbReference type="EMBL" id="AF479898">
    <property type="protein sequence ID" value="AAL79211.1"/>
    <property type="molecule type" value="Genomic_DNA"/>
</dbReference>
<dbReference type="EMBL" id="BK006941">
    <property type="protein sequence ID" value="DAA08298.1"/>
    <property type="molecule type" value="Genomic_DNA"/>
</dbReference>
<dbReference type="RefSeq" id="NP_878082.1">
    <property type="nucleotide sequence ID" value="NM_001184596.1"/>
</dbReference>
<dbReference type="BioGRID" id="37004">
    <property type="interactions" value="15"/>
</dbReference>
<dbReference type="FunCoup" id="Q8TGT7">
    <property type="interactions" value="6"/>
</dbReference>
<dbReference type="STRING" id="4932.YGR204C-A"/>
<dbReference type="PaxDb" id="4932-YGR204C-A"/>
<dbReference type="EnsemblFungi" id="YGR204C-A_mRNA">
    <property type="protein sequence ID" value="YGR204C-A"/>
    <property type="gene ID" value="YGR204C-A"/>
</dbReference>
<dbReference type="GeneID" id="1466462"/>
<dbReference type="KEGG" id="sce:YGR204C-A"/>
<dbReference type="AGR" id="SGD:S000028640"/>
<dbReference type="SGD" id="S000028640">
    <property type="gene designation" value="YGR204C-A"/>
</dbReference>
<dbReference type="VEuPathDB" id="FungiDB:YGR204C-A"/>
<dbReference type="HOGENOM" id="CLU_3351336_0_0_1"/>
<dbReference type="InParanoid" id="Q8TGT7"/>
<dbReference type="BioCyc" id="YEAST:G3O-31018-MONOMER"/>
<dbReference type="PRO" id="PR:Q8TGT7"/>
<dbReference type="Proteomes" id="UP000002311">
    <property type="component" value="Chromosome VII"/>
</dbReference>
<keyword id="KW-1185">Reference proteome</keyword>
<sequence length="37" mass="4538">MQWNAFSFVSYVYLRYFISFRPNIVLASVRLSWYSII</sequence>
<feature type="chain" id="PRO_0000245388" description="Uncharacterized protein YGR204C-A">
    <location>
        <begin position="1"/>
        <end position="37"/>
    </location>
</feature>
<reference key="1">
    <citation type="journal article" date="1997" name="Nature">
        <title>The nucleotide sequence of Saccharomyces cerevisiae chromosome VII.</title>
        <authorList>
            <person name="Tettelin H."/>
            <person name="Agostoni-Carbone M.L."/>
            <person name="Albermann K."/>
            <person name="Albers M."/>
            <person name="Arroyo J."/>
            <person name="Backes U."/>
            <person name="Barreiros T."/>
            <person name="Bertani I."/>
            <person name="Bjourson A.J."/>
            <person name="Brueckner M."/>
            <person name="Bruschi C.V."/>
            <person name="Carignani G."/>
            <person name="Castagnoli L."/>
            <person name="Cerdan E."/>
            <person name="Clemente M.L."/>
            <person name="Coblenz A."/>
            <person name="Coglievina M."/>
            <person name="Coissac E."/>
            <person name="Defoor E."/>
            <person name="Del Bino S."/>
            <person name="Delius H."/>
            <person name="Delneri D."/>
            <person name="de Wergifosse P."/>
            <person name="Dujon B."/>
            <person name="Durand P."/>
            <person name="Entian K.-D."/>
            <person name="Eraso P."/>
            <person name="Escribano V."/>
            <person name="Fabiani L."/>
            <person name="Fartmann B."/>
            <person name="Feroli F."/>
            <person name="Feuermann M."/>
            <person name="Frontali L."/>
            <person name="Garcia-Gonzalez M."/>
            <person name="Garcia-Saez M.I."/>
            <person name="Goffeau A."/>
            <person name="Guerreiro P."/>
            <person name="Hani J."/>
            <person name="Hansen M."/>
            <person name="Hebling U."/>
            <person name="Hernandez K."/>
            <person name="Heumann K."/>
            <person name="Hilger F."/>
            <person name="Hofmann B."/>
            <person name="Indge K.J."/>
            <person name="James C.M."/>
            <person name="Klima R."/>
            <person name="Koetter P."/>
            <person name="Kramer B."/>
            <person name="Kramer W."/>
            <person name="Lauquin G."/>
            <person name="Leuther H."/>
            <person name="Louis E.J."/>
            <person name="Maillier E."/>
            <person name="Marconi A."/>
            <person name="Martegani E."/>
            <person name="Mazon M.J."/>
            <person name="Mazzoni C."/>
            <person name="McReynolds A.D.K."/>
            <person name="Melchioretto P."/>
            <person name="Mewes H.-W."/>
            <person name="Minenkova O."/>
            <person name="Mueller-Auer S."/>
            <person name="Nawrocki A."/>
            <person name="Netter P."/>
            <person name="Neu R."/>
            <person name="Nombela C."/>
            <person name="Oliver S.G."/>
            <person name="Panzeri L."/>
            <person name="Paoluzi S."/>
            <person name="Plevani P."/>
            <person name="Portetelle D."/>
            <person name="Portillo F."/>
            <person name="Potier S."/>
            <person name="Purnelle B."/>
            <person name="Rieger M."/>
            <person name="Riles L."/>
            <person name="Rinaldi T."/>
            <person name="Robben J."/>
            <person name="Rodrigues-Pousada C."/>
            <person name="Rodriguez-Belmonte E."/>
            <person name="Rodriguez-Torres A.M."/>
            <person name="Rose M."/>
            <person name="Ruzzi M."/>
            <person name="Saliola M."/>
            <person name="Sanchez-Perez M."/>
            <person name="Schaefer B."/>
            <person name="Schaefer M."/>
            <person name="Scharfe M."/>
            <person name="Schmidheini T."/>
            <person name="Schreer A."/>
            <person name="Skala J."/>
            <person name="Souciet J.-L."/>
            <person name="Steensma H.Y."/>
            <person name="Talla E."/>
            <person name="Thierry A."/>
            <person name="Vandenbol M."/>
            <person name="van der Aart Q.J.M."/>
            <person name="Van Dyck L."/>
            <person name="Vanoni M."/>
            <person name="Verhasselt P."/>
            <person name="Voet M."/>
            <person name="Volckaert G."/>
            <person name="Wambutt R."/>
            <person name="Watson M.D."/>
            <person name="Weber N."/>
            <person name="Wedler E."/>
            <person name="Wedler H."/>
            <person name="Wipfli P."/>
            <person name="Wolf K."/>
            <person name="Wright L.F."/>
            <person name="Zaccaria P."/>
            <person name="Zimmermann M."/>
            <person name="Zollner A."/>
            <person name="Kleine K."/>
        </authorList>
    </citation>
    <scope>NUCLEOTIDE SEQUENCE [LARGE SCALE GENOMIC DNA]</scope>
    <source>
        <strain>ATCC 204508 / S288c</strain>
    </source>
</reference>
<reference key="2">
    <citation type="journal article" date="2014" name="G3 (Bethesda)">
        <title>The reference genome sequence of Saccharomyces cerevisiae: Then and now.</title>
        <authorList>
            <person name="Engel S.R."/>
            <person name="Dietrich F.S."/>
            <person name="Fisk D.G."/>
            <person name="Binkley G."/>
            <person name="Balakrishnan R."/>
            <person name="Costanzo M.C."/>
            <person name="Dwight S.S."/>
            <person name="Hitz B.C."/>
            <person name="Karra K."/>
            <person name="Nash R.S."/>
            <person name="Weng S."/>
            <person name="Wong E.D."/>
            <person name="Lloyd P."/>
            <person name="Skrzypek M.S."/>
            <person name="Miyasato S.R."/>
            <person name="Simison M."/>
            <person name="Cherry J.M."/>
        </authorList>
    </citation>
    <scope>GENOME REANNOTATION</scope>
    <source>
        <strain>ATCC 204508 / S288c</strain>
    </source>
</reference>
<reference key="3">
    <citation type="journal article" date="2002" name="Nat. Biotechnol.">
        <title>An integrated approach for finding overlooked genes in yeast.</title>
        <authorList>
            <person name="Kumar A."/>
            <person name="Harrison P.M."/>
            <person name="Cheung K.-H."/>
            <person name="Lan N."/>
            <person name="Echols N."/>
            <person name="Bertone P."/>
            <person name="Miller P."/>
            <person name="Gerstein M.B."/>
            <person name="Snyder M."/>
        </authorList>
    </citation>
    <scope>NUCLEOTIDE SEQUENCE [GENOMIC DNA]</scope>
</reference>
<proteinExistence type="predicted"/>